<comment type="subcellular location">
    <subcellularLocation>
        <location evidence="1">Cell membrane</location>
        <topology evidence="1">Multi-pass membrane protein</topology>
    </subcellularLocation>
</comment>
<comment type="similarity">
    <text evidence="1">Belongs to the UPF0756 family.</text>
</comment>
<gene>
    <name type="ordered locus">NGO_1674</name>
</gene>
<feature type="chain" id="PRO_0000388908" description="UPF0756 membrane protein NGO_1674">
    <location>
        <begin position="1"/>
        <end position="148"/>
    </location>
</feature>
<feature type="transmembrane region" description="Helical" evidence="1">
    <location>
        <begin position="10"/>
        <end position="32"/>
    </location>
</feature>
<feature type="transmembrane region" description="Helical" evidence="1">
    <location>
        <begin position="50"/>
        <end position="70"/>
    </location>
</feature>
<feature type="transmembrane region" description="Helical" evidence="1">
    <location>
        <begin position="85"/>
        <end position="105"/>
    </location>
</feature>
<feature type="transmembrane region" description="Helical" evidence="1">
    <location>
        <begin position="116"/>
        <end position="136"/>
    </location>
</feature>
<reference key="1">
    <citation type="submission" date="2003-03" db="EMBL/GenBank/DDBJ databases">
        <title>The complete genome sequence of Neisseria gonorrhoeae.</title>
        <authorList>
            <person name="Lewis L.A."/>
            <person name="Gillaspy A.F."/>
            <person name="McLaughlin R.E."/>
            <person name="Gipson M."/>
            <person name="Ducey T.F."/>
            <person name="Ownbey T."/>
            <person name="Hartman K."/>
            <person name="Nydick C."/>
            <person name="Carson M.B."/>
            <person name="Vaughn J."/>
            <person name="Thomson C."/>
            <person name="Song L."/>
            <person name="Lin S."/>
            <person name="Yuan X."/>
            <person name="Najar F."/>
            <person name="Zhan M."/>
            <person name="Ren Q."/>
            <person name="Zhu H."/>
            <person name="Qi S."/>
            <person name="Kenton S.M."/>
            <person name="Lai H."/>
            <person name="White J.D."/>
            <person name="Clifton S."/>
            <person name="Roe B.A."/>
            <person name="Dyer D.W."/>
        </authorList>
    </citation>
    <scope>NUCLEOTIDE SEQUENCE [LARGE SCALE GENOMIC DNA]</scope>
    <source>
        <strain>ATCC 700825 / FA 1090</strain>
    </source>
</reference>
<organism>
    <name type="scientific">Neisseria gonorrhoeae (strain ATCC 700825 / FA 1090)</name>
    <dbReference type="NCBI Taxonomy" id="242231"/>
    <lineage>
        <taxon>Bacteria</taxon>
        <taxon>Pseudomonadati</taxon>
        <taxon>Pseudomonadota</taxon>
        <taxon>Betaproteobacteria</taxon>
        <taxon>Neisseriales</taxon>
        <taxon>Neisseriaceae</taxon>
        <taxon>Neisseria</taxon>
    </lineage>
</organism>
<protein>
    <recommendedName>
        <fullName evidence="1">UPF0756 membrane protein NGO_1674</fullName>
    </recommendedName>
</protein>
<accession>Q5F688</accession>
<dbReference type="EMBL" id="AE004969">
    <property type="protein sequence ID" value="AAW90299.1"/>
    <property type="molecule type" value="Genomic_DNA"/>
</dbReference>
<dbReference type="RefSeq" id="WP_003689818.1">
    <property type="nucleotide sequence ID" value="NC_002946.2"/>
</dbReference>
<dbReference type="RefSeq" id="YP_208711.1">
    <property type="nucleotide sequence ID" value="NC_002946.2"/>
</dbReference>
<dbReference type="STRING" id="242231.NGO_1674"/>
<dbReference type="KEGG" id="ngo:NGO_1674"/>
<dbReference type="PATRIC" id="fig|242231.10.peg.1995"/>
<dbReference type="HOGENOM" id="CLU_125889_0_0_4"/>
<dbReference type="Proteomes" id="UP000000535">
    <property type="component" value="Chromosome"/>
</dbReference>
<dbReference type="GO" id="GO:0005886">
    <property type="term" value="C:plasma membrane"/>
    <property type="evidence" value="ECO:0007669"/>
    <property type="project" value="UniProtKB-SubCell"/>
</dbReference>
<dbReference type="HAMAP" id="MF_01874">
    <property type="entry name" value="UPF0756"/>
    <property type="match status" value="1"/>
</dbReference>
<dbReference type="InterPro" id="IPR007382">
    <property type="entry name" value="UPF0756_TM"/>
</dbReference>
<dbReference type="PANTHER" id="PTHR38452">
    <property type="entry name" value="UPF0756 MEMBRANE PROTEIN YEAL"/>
    <property type="match status" value="1"/>
</dbReference>
<dbReference type="PANTHER" id="PTHR38452:SF1">
    <property type="entry name" value="UPF0756 MEMBRANE PROTEIN YEAL"/>
    <property type="match status" value="1"/>
</dbReference>
<dbReference type="Pfam" id="PF04284">
    <property type="entry name" value="DUF441"/>
    <property type="match status" value="1"/>
</dbReference>
<keyword id="KW-1003">Cell membrane</keyword>
<keyword id="KW-0472">Membrane</keyword>
<keyword id="KW-1185">Reference proteome</keyword>
<keyword id="KW-0812">Transmembrane</keyword>
<keyword id="KW-1133">Transmembrane helix</keyword>
<evidence type="ECO:0000255" key="1">
    <source>
        <dbReference type="HAMAP-Rule" id="MF_01874"/>
    </source>
</evidence>
<sequence length="148" mass="15394">MNFSFVPLFLVTLILLGVVSNNNSITVSATILLLMQQTALVQFVPLVEKHGLNLGIILLTIGVLSPLVSGKAQVPPVAEFLNFKMISAVFIGIFVAWLAGCGVPLMGRQPVLVTGLLIGTVIGVAFMGGIPVGPLIAADILSFVAGKV</sequence>
<name>Y1674_NEIG1</name>
<proteinExistence type="inferred from homology"/>